<accession>B7GJ81</accession>
<organism>
    <name type="scientific">Anoxybacillus flavithermus (strain DSM 21510 / WK1)</name>
    <dbReference type="NCBI Taxonomy" id="491915"/>
    <lineage>
        <taxon>Bacteria</taxon>
        <taxon>Bacillati</taxon>
        <taxon>Bacillota</taxon>
        <taxon>Bacilli</taxon>
        <taxon>Bacillales</taxon>
        <taxon>Anoxybacillaceae</taxon>
        <taxon>Anoxybacillus</taxon>
    </lineage>
</organism>
<name>RS8_ANOFW</name>
<comment type="function">
    <text evidence="1">One of the primary rRNA binding proteins, it binds directly to 16S rRNA central domain where it helps coordinate assembly of the platform of the 30S subunit.</text>
</comment>
<comment type="subunit">
    <text evidence="1">Part of the 30S ribosomal subunit. Contacts proteins S5 and S12.</text>
</comment>
<comment type="similarity">
    <text evidence="1">Belongs to the universal ribosomal protein uS8 family.</text>
</comment>
<protein>
    <recommendedName>
        <fullName evidence="1">Small ribosomal subunit protein uS8</fullName>
    </recommendedName>
    <alternativeName>
        <fullName evidence="2">30S ribosomal protein S8</fullName>
    </alternativeName>
</protein>
<reference key="1">
    <citation type="journal article" date="2008" name="Genome Biol.">
        <title>Encapsulated in silica: genome, proteome and physiology of the thermophilic bacterium Anoxybacillus flavithermus WK1.</title>
        <authorList>
            <person name="Saw J.H."/>
            <person name="Mountain B.W."/>
            <person name="Feng L."/>
            <person name="Omelchenko M.V."/>
            <person name="Hou S."/>
            <person name="Saito J.A."/>
            <person name="Stott M.B."/>
            <person name="Li D."/>
            <person name="Zhao G."/>
            <person name="Wu J."/>
            <person name="Galperin M.Y."/>
            <person name="Koonin E.V."/>
            <person name="Makarova K.S."/>
            <person name="Wolf Y.I."/>
            <person name="Rigden D.J."/>
            <person name="Dunfield P.F."/>
            <person name="Wang L."/>
            <person name="Alam M."/>
        </authorList>
    </citation>
    <scope>NUCLEOTIDE SEQUENCE [LARGE SCALE GENOMIC DNA]</scope>
    <source>
        <strain>DSM 21510 / WK1</strain>
    </source>
</reference>
<sequence>MVMTDPIADMLTRIRNANMVRHEKLEVPASKIKREIAEILKREGFIRDVEYIEDNKQGILRIFLKYGPNNERVITGLKRISKPGLRVYAKADEVPRVLNGLGIAILSTSQGILTDKEARQKRTGGEVLAYIW</sequence>
<gene>
    <name evidence="1" type="primary">rpsH</name>
    <name type="ordered locus">Aflv_0119</name>
</gene>
<dbReference type="EMBL" id="CP000922">
    <property type="protein sequence ID" value="ACJ32503.1"/>
    <property type="molecule type" value="Genomic_DNA"/>
</dbReference>
<dbReference type="RefSeq" id="WP_003397680.1">
    <property type="nucleotide sequence ID" value="NC_011567.1"/>
</dbReference>
<dbReference type="SMR" id="B7GJ81"/>
<dbReference type="STRING" id="491915.Aflv_0119"/>
<dbReference type="GeneID" id="7036318"/>
<dbReference type="KEGG" id="afl:Aflv_0119"/>
<dbReference type="eggNOG" id="COG0096">
    <property type="taxonomic scope" value="Bacteria"/>
</dbReference>
<dbReference type="HOGENOM" id="CLU_098428_0_2_9"/>
<dbReference type="Proteomes" id="UP000000742">
    <property type="component" value="Chromosome"/>
</dbReference>
<dbReference type="GO" id="GO:1990904">
    <property type="term" value="C:ribonucleoprotein complex"/>
    <property type="evidence" value="ECO:0007669"/>
    <property type="project" value="UniProtKB-KW"/>
</dbReference>
<dbReference type="GO" id="GO:0005840">
    <property type="term" value="C:ribosome"/>
    <property type="evidence" value="ECO:0007669"/>
    <property type="project" value="UniProtKB-KW"/>
</dbReference>
<dbReference type="GO" id="GO:0019843">
    <property type="term" value="F:rRNA binding"/>
    <property type="evidence" value="ECO:0007669"/>
    <property type="project" value="UniProtKB-UniRule"/>
</dbReference>
<dbReference type="GO" id="GO:0003735">
    <property type="term" value="F:structural constituent of ribosome"/>
    <property type="evidence" value="ECO:0007669"/>
    <property type="project" value="InterPro"/>
</dbReference>
<dbReference type="GO" id="GO:0006412">
    <property type="term" value="P:translation"/>
    <property type="evidence" value="ECO:0007669"/>
    <property type="project" value="UniProtKB-UniRule"/>
</dbReference>
<dbReference type="FunFam" id="3.30.1370.30:FF:000002">
    <property type="entry name" value="30S ribosomal protein S8"/>
    <property type="match status" value="1"/>
</dbReference>
<dbReference type="FunFam" id="3.30.1490.10:FF:000001">
    <property type="entry name" value="30S ribosomal protein S8"/>
    <property type="match status" value="1"/>
</dbReference>
<dbReference type="Gene3D" id="3.30.1370.30">
    <property type="match status" value="1"/>
</dbReference>
<dbReference type="Gene3D" id="3.30.1490.10">
    <property type="match status" value="1"/>
</dbReference>
<dbReference type="HAMAP" id="MF_01302_B">
    <property type="entry name" value="Ribosomal_uS8_B"/>
    <property type="match status" value="1"/>
</dbReference>
<dbReference type="InterPro" id="IPR000630">
    <property type="entry name" value="Ribosomal_uS8"/>
</dbReference>
<dbReference type="InterPro" id="IPR047863">
    <property type="entry name" value="Ribosomal_uS8_CS"/>
</dbReference>
<dbReference type="InterPro" id="IPR035987">
    <property type="entry name" value="Ribosomal_uS8_sf"/>
</dbReference>
<dbReference type="NCBIfam" id="NF001109">
    <property type="entry name" value="PRK00136.1"/>
    <property type="match status" value="1"/>
</dbReference>
<dbReference type="PANTHER" id="PTHR11758">
    <property type="entry name" value="40S RIBOSOMAL PROTEIN S15A"/>
    <property type="match status" value="1"/>
</dbReference>
<dbReference type="Pfam" id="PF00410">
    <property type="entry name" value="Ribosomal_S8"/>
    <property type="match status" value="1"/>
</dbReference>
<dbReference type="SUPFAM" id="SSF56047">
    <property type="entry name" value="Ribosomal protein S8"/>
    <property type="match status" value="1"/>
</dbReference>
<dbReference type="PROSITE" id="PS00053">
    <property type="entry name" value="RIBOSOMAL_S8"/>
    <property type="match status" value="1"/>
</dbReference>
<proteinExistence type="inferred from homology"/>
<feature type="chain" id="PRO_1000140507" description="Small ribosomal subunit protein uS8">
    <location>
        <begin position="1"/>
        <end position="132"/>
    </location>
</feature>
<evidence type="ECO:0000255" key="1">
    <source>
        <dbReference type="HAMAP-Rule" id="MF_01302"/>
    </source>
</evidence>
<evidence type="ECO:0000305" key="2"/>
<keyword id="KW-0687">Ribonucleoprotein</keyword>
<keyword id="KW-0689">Ribosomal protein</keyword>
<keyword id="KW-0694">RNA-binding</keyword>
<keyword id="KW-0699">rRNA-binding</keyword>